<sequence length="145" mass="16428">MRTTFMAKANEVERKWYVVDAEGQTLGRLASEVASILRGKNKPTFTPHVDTGDHVIIINAEKIHLTGNKLNDKIYYRHTNHPGGLKQRTALEMRTNYPVQMLELAIKGMLPKGRLGRQVSKKLNVYAGAEHPHQAQKPEVYELRG</sequence>
<accession>Q73F63</accession>
<name>RL13_BACC1</name>
<reference key="1">
    <citation type="journal article" date="2004" name="Nucleic Acids Res.">
        <title>The genome sequence of Bacillus cereus ATCC 10987 reveals metabolic adaptations and a large plasmid related to Bacillus anthracis pXO1.</title>
        <authorList>
            <person name="Rasko D.A."/>
            <person name="Ravel J."/>
            <person name="Oekstad O.A."/>
            <person name="Helgason E."/>
            <person name="Cer R.Z."/>
            <person name="Jiang L."/>
            <person name="Shores K.A."/>
            <person name="Fouts D.E."/>
            <person name="Tourasse N.J."/>
            <person name="Angiuoli S.V."/>
            <person name="Kolonay J.F."/>
            <person name="Nelson W.C."/>
            <person name="Kolstoe A.-B."/>
            <person name="Fraser C.M."/>
            <person name="Read T.D."/>
        </authorList>
    </citation>
    <scope>NUCLEOTIDE SEQUENCE [LARGE SCALE GENOMIC DNA]</scope>
    <source>
        <strain>ATCC 10987 / NRS 248</strain>
    </source>
</reference>
<protein>
    <recommendedName>
        <fullName evidence="1">Large ribosomal subunit protein uL13</fullName>
    </recommendedName>
    <alternativeName>
        <fullName evidence="2">50S ribosomal protein L13</fullName>
    </alternativeName>
</protein>
<gene>
    <name evidence="1" type="primary">rplM</name>
    <name type="ordered locus">BCE_0143</name>
</gene>
<keyword id="KW-0687">Ribonucleoprotein</keyword>
<keyword id="KW-0689">Ribosomal protein</keyword>
<feature type="chain" id="PRO_0000261682" description="Large ribosomal subunit protein uL13">
    <location>
        <begin position="1"/>
        <end position="145"/>
    </location>
</feature>
<proteinExistence type="inferred from homology"/>
<evidence type="ECO:0000255" key="1">
    <source>
        <dbReference type="HAMAP-Rule" id="MF_01366"/>
    </source>
</evidence>
<evidence type="ECO:0000305" key="2"/>
<dbReference type="EMBL" id="AE017194">
    <property type="protein sequence ID" value="AAS39079.1"/>
    <property type="molecule type" value="Genomic_DNA"/>
</dbReference>
<dbReference type="SMR" id="Q73F63"/>
<dbReference type="KEGG" id="bca:BCE_0143"/>
<dbReference type="HOGENOM" id="CLU_082184_2_2_9"/>
<dbReference type="Proteomes" id="UP000002527">
    <property type="component" value="Chromosome"/>
</dbReference>
<dbReference type="GO" id="GO:0022625">
    <property type="term" value="C:cytosolic large ribosomal subunit"/>
    <property type="evidence" value="ECO:0007669"/>
    <property type="project" value="TreeGrafter"/>
</dbReference>
<dbReference type="GO" id="GO:0003729">
    <property type="term" value="F:mRNA binding"/>
    <property type="evidence" value="ECO:0007669"/>
    <property type="project" value="TreeGrafter"/>
</dbReference>
<dbReference type="GO" id="GO:0003735">
    <property type="term" value="F:structural constituent of ribosome"/>
    <property type="evidence" value="ECO:0007669"/>
    <property type="project" value="InterPro"/>
</dbReference>
<dbReference type="GO" id="GO:0017148">
    <property type="term" value="P:negative regulation of translation"/>
    <property type="evidence" value="ECO:0007669"/>
    <property type="project" value="TreeGrafter"/>
</dbReference>
<dbReference type="GO" id="GO:0006412">
    <property type="term" value="P:translation"/>
    <property type="evidence" value="ECO:0007669"/>
    <property type="project" value="UniProtKB-UniRule"/>
</dbReference>
<dbReference type="CDD" id="cd00392">
    <property type="entry name" value="Ribosomal_L13"/>
    <property type="match status" value="1"/>
</dbReference>
<dbReference type="FunFam" id="3.90.1180.10:FF:000001">
    <property type="entry name" value="50S ribosomal protein L13"/>
    <property type="match status" value="1"/>
</dbReference>
<dbReference type="Gene3D" id="3.90.1180.10">
    <property type="entry name" value="Ribosomal protein L13"/>
    <property type="match status" value="1"/>
</dbReference>
<dbReference type="HAMAP" id="MF_01366">
    <property type="entry name" value="Ribosomal_uL13"/>
    <property type="match status" value="1"/>
</dbReference>
<dbReference type="InterPro" id="IPR005822">
    <property type="entry name" value="Ribosomal_uL13"/>
</dbReference>
<dbReference type="InterPro" id="IPR005823">
    <property type="entry name" value="Ribosomal_uL13_bac-type"/>
</dbReference>
<dbReference type="InterPro" id="IPR023563">
    <property type="entry name" value="Ribosomal_uL13_CS"/>
</dbReference>
<dbReference type="InterPro" id="IPR036899">
    <property type="entry name" value="Ribosomal_uL13_sf"/>
</dbReference>
<dbReference type="NCBIfam" id="TIGR01066">
    <property type="entry name" value="rplM_bact"/>
    <property type="match status" value="1"/>
</dbReference>
<dbReference type="PANTHER" id="PTHR11545:SF2">
    <property type="entry name" value="LARGE RIBOSOMAL SUBUNIT PROTEIN UL13M"/>
    <property type="match status" value="1"/>
</dbReference>
<dbReference type="PANTHER" id="PTHR11545">
    <property type="entry name" value="RIBOSOMAL PROTEIN L13"/>
    <property type="match status" value="1"/>
</dbReference>
<dbReference type="Pfam" id="PF00572">
    <property type="entry name" value="Ribosomal_L13"/>
    <property type="match status" value="1"/>
</dbReference>
<dbReference type="PIRSF" id="PIRSF002181">
    <property type="entry name" value="Ribosomal_L13"/>
    <property type="match status" value="1"/>
</dbReference>
<dbReference type="SUPFAM" id="SSF52161">
    <property type="entry name" value="Ribosomal protein L13"/>
    <property type="match status" value="1"/>
</dbReference>
<dbReference type="PROSITE" id="PS00783">
    <property type="entry name" value="RIBOSOMAL_L13"/>
    <property type="match status" value="1"/>
</dbReference>
<organism>
    <name type="scientific">Bacillus cereus (strain ATCC 10987 / NRS 248)</name>
    <dbReference type="NCBI Taxonomy" id="222523"/>
    <lineage>
        <taxon>Bacteria</taxon>
        <taxon>Bacillati</taxon>
        <taxon>Bacillota</taxon>
        <taxon>Bacilli</taxon>
        <taxon>Bacillales</taxon>
        <taxon>Bacillaceae</taxon>
        <taxon>Bacillus</taxon>
        <taxon>Bacillus cereus group</taxon>
    </lineage>
</organism>
<comment type="function">
    <text evidence="1">This protein is one of the early assembly proteins of the 50S ribosomal subunit, although it is not seen to bind rRNA by itself. It is important during the early stages of 50S assembly.</text>
</comment>
<comment type="subunit">
    <text evidence="1">Part of the 50S ribosomal subunit.</text>
</comment>
<comment type="similarity">
    <text evidence="1">Belongs to the universal ribosomal protein uL13 family.</text>
</comment>